<sequence>MKCPHCGNNGSRVVDSRPTDEGRVIRRRRECEKCGFRFTTFERVEATPLLVIKKNGSREEFDRDKILKGIVRAAEKRPLNMEQMTDMVDKVENKVRSLGESEISSQIIGEYVMNILVDLDEIAYIRFASVYRQFKDMHVFLDELQDMMKKDEEKEKE</sequence>
<proteinExistence type="inferred from homology"/>
<evidence type="ECO:0000255" key="1">
    <source>
        <dbReference type="HAMAP-Rule" id="MF_00440"/>
    </source>
</evidence>
<evidence type="ECO:0000256" key="2">
    <source>
        <dbReference type="SAM" id="MobiDB-lite"/>
    </source>
</evidence>
<feature type="chain" id="PRO_1000080789" description="Transcriptional repressor NrdR">
    <location>
        <begin position="1"/>
        <end position="157"/>
    </location>
</feature>
<feature type="domain" description="ATP-cone" evidence="1">
    <location>
        <begin position="49"/>
        <end position="139"/>
    </location>
</feature>
<feature type="zinc finger region" evidence="1">
    <location>
        <begin position="3"/>
        <end position="34"/>
    </location>
</feature>
<feature type="region of interest" description="Disordered" evidence="2">
    <location>
        <begin position="1"/>
        <end position="21"/>
    </location>
</feature>
<dbReference type="EMBL" id="CP000422">
    <property type="protein sequence ID" value="ABJ67752.1"/>
    <property type="molecule type" value="Genomic_DNA"/>
</dbReference>
<dbReference type="RefSeq" id="WP_002833791.1">
    <property type="nucleotide sequence ID" value="NC_008525.1"/>
</dbReference>
<dbReference type="SMR" id="Q03GC0"/>
<dbReference type="STRING" id="278197.PEPE_0691"/>
<dbReference type="GeneID" id="33061608"/>
<dbReference type="KEGG" id="ppe:PEPE_0691"/>
<dbReference type="eggNOG" id="COG1327">
    <property type="taxonomic scope" value="Bacteria"/>
</dbReference>
<dbReference type="HOGENOM" id="CLU_108412_0_0_9"/>
<dbReference type="OrthoDB" id="9807461at2"/>
<dbReference type="Proteomes" id="UP000000773">
    <property type="component" value="Chromosome"/>
</dbReference>
<dbReference type="GO" id="GO:0005524">
    <property type="term" value="F:ATP binding"/>
    <property type="evidence" value="ECO:0007669"/>
    <property type="project" value="UniProtKB-KW"/>
</dbReference>
<dbReference type="GO" id="GO:0003677">
    <property type="term" value="F:DNA binding"/>
    <property type="evidence" value="ECO:0007669"/>
    <property type="project" value="UniProtKB-KW"/>
</dbReference>
<dbReference type="GO" id="GO:0008270">
    <property type="term" value="F:zinc ion binding"/>
    <property type="evidence" value="ECO:0007669"/>
    <property type="project" value="UniProtKB-UniRule"/>
</dbReference>
<dbReference type="GO" id="GO:0045892">
    <property type="term" value="P:negative regulation of DNA-templated transcription"/>
    <property type="evidence" value="ECO:0007669"/>
    <property type="project" value="UniProtKB-UniRule"/>
</dbReference>
<dbReference type="HAMAP" id="MF_00440">
    <property type="entry name" value="NrdR"/>
    <property type="match status" value="1"/>
</dbReference>
<dbReference type="InterPro" id="IPR005144">
    <property type="entry name" value="ATP-cone_dom"/>
</dbReference>
<dbReference type="InterPro" id="IPR055173">
    <property type="entry name" value="NrdR-like_N"/>
</dbReference>
<dbReference type="InterPro" id="IPR003796">
    <property type="entry name" value="RNR_NrdR-like"/>
</dbReference>
<dbReference type="NCBIfam" id="TIGR00244">
    <property type="entry name" value="transcriptional regulator NrdR"/>
    <property type="match status" value="1"/>
</dbReference>
<dbReference type="PANTHER" id="PTHR30455">
    <property type="entry name" value="TRANSCRIPTIONAL REPRESSOR NRDR"/>
    <property type="match status" value="1"/>
</dbReference>
<dbReference type="PANTHER" id="PTHR30455:SF2">
    <property type="entry name" value="TRANSCRIPTIONAL REPRESSOR NRDR"/>
    <property type="match status" value="1"/>
</dbReference>
<dbReference type="Pfam" id="PF03477">
    <property type="entry name" value="ATP-cone"/>
    <property type="match status" value="1"/>
</dbReference>
<dbReference type="Pfam" id="PF22811">
    <property type="entry name" value="Zn_ribbon_NrdR"/>
    <property type="match status" value="1"/>
</dbReference>
<dbReference type="PROSITE" id="PS51161">
    <property type="entry name" value="ATP_CONE"/>
    <property type="match status" value="1"/>
</dbReference>
<gene>
    <name evidence="1" type="primary">nrdR</name>
    <name type="ordered locus">PEPE_0691</name>
</gene>
<reference key="1">
    <citation type="journal article" date="2006" name="Proc. Natl. Acad. Sci. U.S.A.">
        <title>Comparative genomics of the lactic acid bacteria.</title>
        <authorList>
            <person name="Makarova K.S."/>
            <person name="Slesarev A."/>
            <person name="Wolf Y.I."/>
            <person name="Sorokin A."/>
            <person name="Mirkin B."/>
            <person name="Koonin E.V."/>
            <person name="Pavlov A."/>
            <person name="Pavlova N."/>
            <person name="Karamychev V."/>
            <person name="Polouchine N."/>
            <person name="Shakhova V."/>
            <person name="Grigoriev I."/>
            <person name="Lou Y."/>
            <person name="Rohksar D."/>
            <person name="Lucas S."/>
            <person name="Huang K."/>
            <person name="Goodstein D.M."/>
            <person name="Hawkins T."/>
            <person name="Plengvidhya V."/>
            <person name="Welker D."/>
            <person name="Hughes J."/>
            <person name="Goh Y."/>
            <person name="Benson A."/>
            <person name="Baldwin K."/>
            <person name="Lee J.-H."/>
            <person name="Diaz-Muniz I."/>
            <person name="Dosti B."/>
            <person name="Smeianov V."/>
            <person name="Wechter W."/>
            <person name="Barabote R."/>
            <person name="Lorca G."/>
            <person name="Altermann E."/>
            <person name="Barrangou R."/>
            <person name="Ganesan B."/>
            <person name="Xie Y."/>
            <person name="Rawsthorne H."/>
            <person name="Tamir D."/>
            <person name="Parker C."/>
            <person name="Breidt F."/>
            <person name="Broadbent J.R."/>
            <person name="Hutkins R."/>
            <person name="O'Sullivan D."/>
            <person name="Steele J."/>
            <person name="Unlu G."/>
            <person name="Saier M.H. Jr."/>
            <person name="Klaenhammer T."/>
            <person name="Richardson P."/>
            <person name="Kozyavkin S."/>
            <person name="Weimer B.C."/>
            <person name="Mills D.A."/>
        </authorList>
    </citation>
    <scope>NUCLEOTIDE SEQUENCE [LARGE SCALE GENOMIC DNA]</scope>
    <source>
        <strain>ATCC 25745 / CCUG 21536 / LMG 10740 / 183-1w</strain>
    </source>
</reference>
<keyword id="KW-0067">ATP-binding</keyword>
<keyword id="KW-0238">DNA-binding</keyword>
<keyword id="KW-0479">Metal-binding</keyword>
<keyword id="KW-0547">Nucleotide-binding</keyword>
<keyword id="KW-0678">Repressor</keyword>
<keyword id="KW-0804">Transcription</keyword>
<keyword id="KW-0805">Transcription regulation</keyword>
<keyword id="KW-0862">Zinc</keyword>
<keyword id="KW-0863">Zinc-finger</keyword>
<protein>
    <recommendedName>
        <fullName evidence="1">Transcriptional repressor NrdR</fullName>
    </recommendedName>
</protein>
<organism>
    <name type="scientific">Pediococcus pentosaceus (strain ATCC 25745 / CCUG 21536 / LMG 10740 / 183-1w)</name>
    <dbReference type="NCBI Taxonomy" id="278197"/>
    <lineage>
        <taxon>Bacteria</taxon>
        <taxon>Bacillati</taxon>
        <taxon>Bacillota</taxon>
        <taxon>Bacilli</taxon>
        <taxon>Lactobacillales</taxon>
        <taxon>Lactobacillaceae</taxon>
        <taxon>Pediococcus</taxon>
    </lineage>
</organism>
<comment type="function">
    <text evidence="1">Negatively regulates transcription of bacterial ribonucleotide reductase nrd genes and operons by binding to NrdR-boxes.</text>
</comment>
<comment type="cofactor">
    <cofactor evidence="1">
        <name>Zn(2+)</name>
        <dbReference type="ChEBI" id="CHEBI:29105"/>
    </cofactor>
    <text evidence="1">Binds 1 zinc ion.</text>
</comment>
<comment type="similarity">
    <text evidence="1">Belongs to the NrdR family.</text>
</comment>
<accession>Q03GC0</accession>
<name>NRDR_PEDPA</name>